<feature type="chain" id="PRO_1000134928" description="L-seryl-tRNA(Sec) selenium transferase">
    <location>
        <begin position="1"/>
        <end position="463"/>
    </location>
</feature>
<feature type="modified residue" description="N6-(pyridoxal phosphate)lysine" evidence="1">
    <location>
        <position position="295"/>
    </location>
</feature>
<name>SELA_SALPC</name>
<organism>
    <name type="scientific">Salmonella paratyphi C (strain RKS4594)</name>
    <dbReference type="NCBI Taxonomy" id="476213"/>
    <lineage>
        <taxon>Bacteria</taxon>
        <taxon>Pseudomonadati</taxon>
        <taxon>Pseudomonadota</taxon>
        <taxon>Gammaproteobacteria</taxon>
        <taxon>Enterobacterales</taxon>
        <taxon>Enterobacteriaceae</taxon>
        <taxon>Salmonella</taxon>
    </lineage>
</organism>
<proteinExistence type="inferred from homology"/>
<keyword id="KW-0963">Cytoplasm</keyword>
<keyword id="KW-0648">Protein biosynthesis</keyword>
<keyword id="KW-0663">Pyridoxal phosphate</keyword>
<keyword id="KW-0711">Selenium</keyword>
<keyword id="KW-0808">Transferase</keyword>
<dbReference type="EC" id="2.9.1.1" evidence="1"/>
<dbReference type="EMBL" id="CP000857">
    <property type="protein sequence ID" value="ACN47840.1"/>
    <property type="molecule type" value="Genomic_DNA"/>
</dbReference>
<dbReference type="RefSeq" id="WP_000200188.1">
    <property type="nucleotide sequence ID" value="NC_012125.1"/>
</dbReference>
<dbReference type="SMR" id="C0Q1E4"/>
<dbReference type="KEGG" id="sei:SPC_3763"/>
<dbReference type="HOGENOM" id="CLU_038142_1_0_6"/>
<dbReference type="UniPathway" id="UPA00906">
    <property type="reaction ID" value="UER00896"/>
</dbReference>
<dbReference type="Proteomes" id="UP000001599">
    <property type="component" value="Chromosome"/>
</dbReference>
<dbReference type="GO" id="GO:0005737">
    <property type="term" value="C:cytoplasm"/>
    <property type="evidence" value="ECO:0007669"/>
    <property type="project" value="UniProtKB-SubCell"/>
</dbReference>
<dbReference type="GO" id="GO:0004125">
    <property type="term" value="F:L-seryl-tRNA(Sec) selenium transferase activity"/>
    <property type="evidence" value="ECO:0007669"/>
    <property type="project" value="UniProtKB-UniRule"/>
</dbReference>
<dbReference type="GO" id="GO:0001717">
    <property type="term" value="P:conversion of seryl-tRNAsec to selenocys-tRNAsec"/>
    <property type="evidence" value="ECO:0007669"/>
    <property type="project" value="UniProtKB-UniRule"/>
</dbReference>
<dbReference type="GO" id="GO:0001514">
    <property type="term" value="P:selenocysteine incorporation"/>
    <property type="evidence" value="ECO:0007669"/>
    <property type="project" value="UniProtKB-UniRule"/>
</dbReference>
<dbReference type="FunFam" id="3.40.640.10:FF:000028">
    <property type="entry name" value="L-seryl-tRNA(Sec) selenium transferase"/>
    <property type="match status" value="1"/>
</dbReference>
<dbReference type="FunFam" id="3.90.1150.180:FF:000001">
    <property type="entry name" value="L-seryl-tRNA(Sec) selenium transferase"/>
    <property type="match status" value="1"/>
</dbReference>
<dbReference type="Gene3D" id="3.90.1150.180">
    <property type="match status" value="1"/>
</dbReference>
<dbReference type="Gene3D" id="3.40.640.10">
    <property type="entry name" value="Type I PLP-dependent aspartate aminotransferase-like (Major domain)"/>
    <property type="match status" value="1"/>
</dbReference>
<dbReference type="HAMAP" id="MF_00423">
    <property type="entry name" value="SelA"/>
    <property type="match status" value="1"/>
</dbReference>
<dbReference type="InterPro" id="IPR015424">
    <property type="entry name" value="PyrdxlP-dep_Trfase"/>
</dbReference>
<dbReference type="InterPro" id="IPR015421">
    <property type="entry name" value="PyrdxlP-dep_Trfase_major"/>
</dbReference>
<dbReference type="InterPro" id="IPR018319">
    <property type="entry name" value="SelA-like"/>
</dbReference>
<dbReference type="InterPro" id="IPR004534">
    <property type="entry name" value="SelA_trans"/>
</dbReference>
<dbReference type="InterPro" id="IPR025862">
    <property type="entry name" value="SelA_trans_N_dom"/>
</dbReference>
<dbReference type="NCBIfam" id="TIGR00474">
    <property type="entry name" value="selA"/>
    <property type="match status" value="1"/>
</dbReference>
<dbReference type="PANTHER" id="PTHR32328">
    <property type="entry name" value="L-SERYL-TRNA(SEC) SELENIUM TRANSFERASE"/>
    <property type="match status" value="1"/>
</dbReference>
<dbReference type="PANTHER" id="PTHR32328:SF0">
    <property type="entry name" value="L-SERYL-TRNA(SEC) SELENIUM TRANSFERASE"/>
    <property type="match status" value="1"/>
</dbReference>
<dbReference type="Pfam" id="PF12390">
    <property type="entry name" value="Se-cys_synth_N"/>
    <property type="match status" value="1"/>
</dbReference>
<dbReference type="Pfam" id="PF03841">
    <property type="entry name" value="SelA"/>
    <property type="match status" value="1"/>
</dbReference>
<dbReference type="SUPFAM" id="SSF53383">
    <property type="entry name" value="PLP-dependent transferases"/>
    <property type="match status" value="1"/>
</dbReference>
<accession>C0Q1E4</accession>
<reference key="1">
    <citation type="journal article" date="2009" name="PLoS ONE">
        <title>Salmonella paratyphi C: genetic divergence from Salmonella choleraesuis and pathogenic convergence with Salmonella typhi.</title>
        <authorList>
            <person name="Liu W.-Q."/>
            <person name="Feng Y."/>
            <person name="Wang Y."/>
            <person name="Zou Q.-H."/>
            <person name="Chen F."/>
            <person name="Guo J.-T."/>
            <person name="Peng Y.-H."/>
            <person name="Jin Y."/>
            <person name="Li Y.-G."/>
            <person name="Hu S.-N."/>
            <person name="Johnston R.N."/>
            <person name="Liu G.-R."/>
            <person name="Liu S.-L."/>
        </authorList>
    </citation>
    <scope>NUCLEOTIDE SEQUENCE [LARGE SCALE GENOMIC DNA]</scope>
    <source>
        <strain>RKS4594</strain>
    </source>
</reference>
<protein>
    <recommendedName>
        <fullName evidence="1">L-seryl-tRNA(Sec) selenium transferase</fullName>
        <ecNumber evidence="1">2.9.1.1</ecNumber>
    </recommendedName>
    <alternativeName>
        <fullName evidence="1">Selenocysteine synthase</fullName>
        <shortName evidence="1">Sec synthase</shortName>
    </alternativeName>
    <alternativeName>
        <fullName evidence="1">Selenocysteinyl-tRNA(Sec) synthase</fullName>
    </alternativeName>
</protein>
<sequence>MTSETRTLYSQLPAIDRLLHDSAFLSLRDRYGHTQVVDLLRRMLDDARDVIRNTQTLPDWYADWAQEAKLRLENAAQSALRPVINLTGTVLHTNLGRALQAQEAIEAVTQAMRAPVTLEYDLDGAGRGHRDRALATLLCRITGAEDACIVNNNAAAVLLMLAATASGKEVVVSRGELVEIGGAFRIPDVMRQAGCTLHEVGTTNRTHAKDYRQAVNENTGLLMKVHTSNYSIEGFTKTVEEAELAEIGRELDIPVVADLGSGSLVDLSQYGLPKEPMPQQLIAAGVSLVSFSGDKLLGGPQAGIIVGKKAMIAQLQSHPLKRALRADKMTLAALEATLRLYLHPEALAEKLPTLRLLTRSEASIREQAQRLQARLAARYGDEFALEVKPCLSQIGSGSLPVDRLPSAAMTFTPHDGRGSRLEALAARWRTLPVPVIGRIYDGRLWLDMRCLEDESRFMEMMLK</sequence>
<evidence type="ECO:0000255" key="1">
    <source>
        <dbReference type="HAMAP-Rule" id="MF_00423"/>
    </source>
</evidence>
<gene>
    <name evidence="1" type="primary">selA</name>
    <name type="ordered locus">SPC_3763</name>
</gene>
<comment type="function">
    <text evidence="1">Converts seryl-tRNA(Sec) to selenocysteinyl-tRNA(Sec) required for selenoprotein biosynthesis.</text>
</comment>
<comment type="catalytic activity">
    <reaction evidence="1">
        <text>L-seryl-tRNA(Sec) + selenophosphate + H(+) = L-selenocysteinyl-tRNA(Sec) + phosphate</text>
        <dbReference type="Rhea" id="RHEA:22728"/>
        <dbReference type="Rhea" id="RHEA-COMP:9742"/>
        <dbReference type="Rhea" id="RHEA-COMP:9743"/>
        <dbReference type="ChEBI" id="CHEBI:15378"/>
        <dbReference type="ChEBI" id="CHEBI:16144"/>
        <dbReference type="ChEBI" id="CHEBI:43474"/>
        <dbReference type="ChEBI" id="CHEBI:78533"/>
        <dbReference type="ChEBI" id="CHEBI:78573"/>
        <dbReference type="EC" id="2.9.1.1"/>
    </reaction>
</comment>
<comment type="cofactor">
    <cofactor evidence="1">
        <name>pyridoxal 5'-phosphate</name>
        <dbReference type="ChEBI" id="CHEBI:597326"/>
    </cofactor>
</comment>
<comment type="pathway">
    <text evidence="1">Aminoacyl-tRNA biosynthesis; selenocysteinyl-tRNA(Sec) biosynthesis; selenocysteinyl-tRNA(Sec) from L-seryl-tRNA(Sec) (bacterial route): step 1/1.</text>
</comment>
<comment type="subunit">
    <text evidence="1">Homodecamer; pentamer of dimers. Binds only one seryl-tRNA(Sec) per dimer.</text>
</comment>
<comment type="subcellular location">
    <subcellularLocation>
        <location evidence="1">Cytoplasm</location>
    </subcellularLocation>
</comment>
<comment type="similarity">
    <text evidence="1">Belongs to the SelA family.</text>
</comment>